<protein>
    <recommendedName>
        <fullName evidence="1">Co-chaperonin GroES</fullName>
    </recommendedName>
    <alternativeName>
        <fullName evidence="1">10 kDa chaperonin</fullName>
    </alternativeName>
    <alternativeName>
        <fullName evidence="1">Chaperonin-10</fullName>
        <shortName evidence="1">Cpn10</shortName>
    </alternativeName>
</protein>
<keyword id="KW-0143">Chaperone</keyword>
<keyword id="KW-0963">Cytoplasm</keyword>
<feature type="chain" id="PRO_0000174843" description="Co-chaperonin GroES">
    <location>
        <begin position="1"/>
        <end position="94"/>
    </location>
</feature>
<comment type="function">
    <text evidence="1">Together with the chaperonin GroEL, plays an essential role in assisting protein folding. The GroEL-GroES system forms a nano-cage that allows encapsulation of the non-native substrate proteins and provides a physical environment optimized to promote and accelerate protein folding. GroES binds to the apical surface of the GroEL ring, thereby capping the opening of the GroEL channel.</text>
</comment>
<comment type="subunit">
    <text evidence="1">Heptamer of 7 subunits arranged in a ring. Interacts with the chaperonin GroEL.</text>
</comment>
<comment type="subcellular location">
    <subcellularLocation>
        <location evidence="1">Cytoplasm</location>
    </subcellularLocation>
</comment>
<comment type="similarity">
    <text evidence="1 2">Belongs to the GroES chaperonin family.</text>
</comment>
<evidence type="ECO:0000255" key="1">
    <source>
        <dbReference type="HAMAP-Rule" id="MF_00580"/>
    </source>
</evidence>
<evidence type="ECO:0000305" key="2"/>
<sequence>MLKPIGNRVIIEKKEQEQTTKSGIVLTDSAKEKSNEGVIVAVGTGRLLNDGTRVTPEVKEGDRVVFQQYAGTEVKRDNETYLVLNEEDILAVIE</sequence>
<reference key="1">
    <citation type="journal article" date="2004" name="Proc. Natl. Acad. Sci. U.S.A.">
        <title>Complete genomes of two clinical Staphylococcus aureus strains: evidence for the rapid evolution of virulence and drug resistance.</title>
        <authorList>
            <person name="Holden M.T.G."/>
            <person name="Feil E.J."/>
            <person name="Lindsay J.A."/>
            <person name="Peacock S.J."/>
            <person name="Day N.P.J."/>
            <person name="Enright M.C."/>
            <person name="Foster T.J."/>
            <person name="Moore C.E."/>
            <person name="Hurst L."/>
            <person name="Atkin R."/>
            <person name="Barron A."/>
            <person name="Bason N."/>
            <person name="Bentley S.D."/>
            <person name="Chillingworth C."/>
            <person name="Chillingworth T."/>
            <person name="Churcher C."/>
            <person name="Clark L."/>
            <person name="Corton C."/>
            <person name="Cronin A."/>
            <person name="Doggett J."/>
            <person name="Dowd L."/>
            <person name="Feltwell T."/>
            <person name="Hance Z."/>
            <person name="Harris B."/>
            <person name="Hauser H."/>
            <person name="Holroyd S."/>
            <person name="Jagels K."/>
            <person name="James K.D."/>
            <person name="Lennard N."/>
            <person name="Line A."/>
            <person name="Mayes R."/>
            <person name="Moule S."/>
            <person name="Mungall K."/>
            <person name="Ormond D."/>
            <person name="Quail M.A."/>
            <person name="Rabbinowitsch E."/>
            <person name="Rutherford K.M."/>
            <person name="Sanders M."/>
            <person name="Sharp S."/>
            <person name="Simmonds M."/>
            <person name="Stevens K."/>
            <person name="Whitehead S."/>
            <person name="Barrell B.G."/>
            <person name="Spratt B.G."/>
            <person name="Parkhill J."/>
        </authorList>
    </citation>
    <scope>NUCLEOTIDE SEQUENCE [LARGE SCALE GENOMIC DNA]</scope>
    <source>
        <strain>MSSA476</strain>
    </source>
</reference>
<organism>
    <name type="scientific">Staphylococcus aureus (strain MSSA476)</name>
    <dbReference type="NCBI Taxonomy" id="282459"/>
    <lineage>
        <taxon>Bacteria</taxon>
        <taxon>Bacillati</taxon>
        <taxon>Bacillota</taxon>
        <taxon>Bacilli</taxon>
        <taxon>Bacillales</taxon>
        <taxon>Staphylococcaceae</taxon>
        <taxon>Staphylococcus</taxon>
    </lineage>
</organism>
<dbReference type="EMBL" id="BX571857">
    <property type="protein sequence ID" value="CAG43742.1"/>
    <property type="molecule type" value="Genomic_DNA"/>
</dbReference>
<dbReference type="RefSeq" id="WP_000917289.1">
    <property type="nucleotide sequence ID" value="NC_002953.3"/>
</dbReference>
<dbReference type="SMR" id="Q6G7S7"/>
<dbReference type="GeneID" id="98346332"/>
<dbReference type="KEGG" id="sas:SAS1936"/>
<dbReference type="HOGENOM" id="CLU_132825_2_1_9"/>
<dbReference type="GO" id="GO:0005737">
    <property type="term" value="C:cytoplasm"/>
    <property type="evidence" value="ECO:0007669"/>
    <property type="project" value="UniProtKB-SubCell"/>
</dbReference>
<dbReference type="GO" id="GO:0005524">
    <property type="term" value="F:ATP binding"/>
    <property type="evidence" value="ECO:0007669"/>
    <property type="project" value="InterPro"/>
</dbReference>
<dbReference type="GO" id="GO:0046872">
    <property type="term" value="F:metal ion binding"/>
    <property type="evidence" value="ECO:0007669"/>
    <property type="project" value="TreeGrafter"/>
</dbReference>
<dbReference type="GO" id="GO:0044183">
    <property type="term" value="F:protein folding chaperone"/>
    <property type="evidence" value="ECO:0007669"/>
    <property type="project" value="InterPro"/>
</dbReference>
<dbReference type="GO" id="GO:0051087">
    <property type="term" value="F:protein-folding chaperone binding"/>
    <property type="evidence" value="ECO:0007669"/>
    <property type="project" value="TreeGrafter"/>
</dbReference>
<dbReference type="GO" id="GO:0051082">
    <property type="term" value="F:unfolded protein binding"/>
    <property type="evidence" value="ECO:0007669"/>
    <property type="project" value="TreeGrafter"/>
</dbReference>
<dbReference type="GO" id="GO:0051085">
    <property type="term" value="P:chaperone cofactor-dependent protein refolding"/>
    <property type="evidence" value="ECO:0007669"/>
    <property type="project" value="TreeGrafter"/>
</dbReference>
<dbReference type="CDD" id="cd00320">
    <property type="entry name" value="cpn10"/>
    <property type="match status" value="1"/>
</dbReference>
<dbReference type="FunFam" id="2.30.33.40:FF:000001">
    <property type="entry name" value="10 kDa chaperonin"/>
    <property type="match status" value="1"/>
</dbReference>
<dbReference type="Gene3D" id="2.30.33.40">
    <property type="entry name" value="GroES chaperonin"/>
    <property type="match status" value="1"/>
</dbReference>
<dbReference type="HAMAP" id="MF_00580">
    <property type="entry name" value="CH10"/>
    <property type="match status" value="1"/>
</dbReference>
<dbReference type="InterPro" id="IPR020818">
    <property type="entry name" value="Chaperonin_GroES"/>
</dbReference>
<dbReference type="InterPro" id="IPR037124">
    <property type="entry name" value="Chaperonin_GroES_sf"/>
</dbReference>
<dbReference type="InterPro" id="IPR018369">
    <property type="entry name" value="Chaprnonin_Cpn10_CS"/>
</dbReference>
<dbReference type="InterPro" id="IPR011032">
    <property type="entry name" value="GroES-like_sf"/>
</dbReference>
<dbReference type="NCBIfam" id="NF001531">
    <property type="entry name" value="PRK00364.2-2"/>
    <property type="match status" value="1"/>
</dbReference>
<dbReference type="NCBIfam" id="NF001532">
    <property type="entry name" value="PRK00364.2-3"/>
    <property type="match status" value="1"/>
</dbReference>
<dbReference type="NCBIfam" id="NF001533">
    <property type="entry name" value="PRK00364.2-4"/>
    <property type="match status" value="1"/>
</dbReference>
<dbReference type="NCBIfam" id="NF001534">
    <property type="entry name" value="PRK00364.2-5"/>
    <property type="match status" value="1"/>
</dbReference>
<dbReference type="PANTHER" id="PTHR10772">
    <property type="entry name" value="10 KDA HEAT SHOCK PROTEIN"/>
    <property type="match status" value="1"/>
</dbReference>
<dbReference type="PANTHER" id="PTHR10772:SF58">
    <property type="entry name" value="CO-CHAPERONIN GROES"/>
    <property type="match status" value="1"/>
</dbReference>
<dbReference type="Pfam" id="PF00166">
    <property type="entry name" value="Cpn10"/>
    <property type="match status" value="1"/>
</dbReference>
<dbReference type="PRINTS" id="PR00297">
    <property type="entry name" value="CHAPERONIN10"/>
</dbReference>
<dbReference type="SMART" id="SM00883">
    <property type="entry name" value="Cpn10"/>
    <property type="match status" value="1"/>
</dbReference>
<dbReference type="SUPFAM" id="SSF50129">
    <property type="entry name" value="GroES-like"/>
    <property type="match status" value="1"/>
</dbReference>
<dbReference type="PROSITE" id="PS00681">
    <property type="entry name" value="CHAPERONINS_CPN10"/>
    <property type="match status" value="1"/>
</dbReference>
<proteinExistence type="inferred from homology"/>
<accession>Q6G7S7</accession>
<name>CH10_STAAS</name>
<gene>
    <name evidence="1" type="primary">groES</name>
    <name evidence="1" type="synonym">groS</name>
    <name type="synonym">hsp10</name>
    <name type="ordered locus">SAS1936</name>
</gene>